<dbReference type="EC" id="2.1.1.-"/>
<dbReference type="EMBL" id="LT708304">
    <property type="protein sequence ID" value="SIT98486.1"/>
    <property type="molecule type" value="Genomic_DNA"/>
</dbReference>
<dbReference type="RefSeq" id="NP_853760.1">
    <property type="nucleotide sequence ID" value="NC_002945.3"/>
</dbReference>
<dbReference type="SMR" id="P65347"/>
<dbReference type="PATRIC" id="fig|233413.5.peg.104"/>
<dbReference type="Proteomes" id="UP000001419">
    <property type="component" value="Chromosome"/>
</dbReference>
<dbReference type="GO" id="GO:0008757">
    <property type="term" value="F:S-adenosylmethionine-dependent methyltransferase activity"/>
    <property type="evidence" value="ECO:0007669"/>
    <property type="project" value="InterPro"/>
</dbReference>
<dbReference type="GO" id="GO:0032259">
    <property type="term" value="P:methylation"/>
    <property type="evidence" value="ECO:0007669"/>
    <property type="project" value="UniProtKB-KW"/>
</dbReference>
<dbReference type="CDD" id="cd02440">
    <property type="entry name" value="AdoMet_MTases"/>
    <property type="match status" value="1"/>
</dbReference>
<dbReference type="Gene3D" id="3.40.50.150">
    <property type="entry name" value="Vaccinia Virus protein VP39"/>
    <property type="match status" value="1"/>
</dbReference>
<dbReference type="InterPro" id="IPR013216">
    <property type="entry name" value="Methyltransf_11"/>
</dbReference>
<dbReference type="InterPro" id="IPR029063">
    <property type="entry name" value="SAM-dependent_MTases_sf"/>
</dbReference>
<dbReference type="PANTHER" id="PTHR43861:SF1">
    <property type="entry name" value="TRANS-ACONITATE 2-METHYLTRANSFERASE"/>
    <property type="match status" value="1"/>
</dbReference>
<dbReference type="PANTHER" id="PTHR43861">
    <property type="entry name" value="TRANS-ACONITATE 2-METHYLTRANSFERASE-RELATED"/>
    <property type="match status" value="1"/>
</dbReference>
<dbReference type="Pfam" id="PF08241">
    <property type="entry name" value="Methyltransf_11"/>
    <property type="match status" value="1"/>
</dbReference>
<dbReference type="SUPFAM" id="SSF53335">
    <property type="entry name" value="S-adenosyl-L-methionine-dependent methyltransferases"/>
    <property type="match status" value="1"/>
</dbReference>
<reference key="1">
    <citation type="journal article" date="2003" name="Proc. Natl. Acad. Sci. U.S.A.">
        <title>The complete genome sequence of Mycobacterium bovis.</title>
        <authorList>
            <person name="Garnier T."/>
            <person name="Eiglmeier K."/>
            <person name="Camus J.-C."/>
            <person name="Medina N."/>
            <person name="Mansoor H."/>
            <person name="Pryor M."/>
            <person name="Duthoy S."/>
            <person name="Grondin S."/>
            <person name="Lacroix C."/>
            <person name="Monsempe C."/>
            <person name="Simon S."/>
            <person name="Harris B."/>
            <person name="Atkin R."/>
            <person name="Doggett J."/>
            <person name="Mayes R."/>
            <person name="Keating L."/>
            <person name="Wheeler P.R."/>
            <person name="Parkhill J."/>
            <person name="Barrell B.G."/>
            <person name="Cole S.T."/>
            <person name="Gordon S.V."/>
            <person name="Hewinson R.G."/>
        </authorList>
    </citation>
    <scope>NUCLEOTIDE SEQUENCE [LARGE SCALE GENOMIC DNA]</scope>
    <source>
        <strain>ATCC BAA-935 / AF2122/97</strain>
    </source>
</reference>
<reference key="2">
    <citation type="journal article" date="2017" name="Genome Announc.">
        <title>Updated reference genome sequence and annotation of Mycobacterium bovis AF2122/97.</title>
        <authorList>
            <person name="Malone K.M."/>
            <person name="Farrell D."/>
            <person name="Stuber T.P."/>
            <person name="Schubert O.T."/>
            <person name="Aebersold R."/>
            <person name="Robbe-Austerman S."/>
            <person name="Gordon S.V."/>
        </authorList>
    </citation>
    <scope>NUCLEOTIDE SEQUENCE [LARGE SCALE GENOMIC DNA]</scope>
    <scope>GENOME REANNOTATION</scope>
    <source>
        <strain>ATCC BAA-935 / AF2122/97</strain>
    </source>
</reference>
<feature type="chain" id="PRO_0000204442" description="Uncharacterized methyltransferase Mb0092">
    <location>
        <begin position="1"/>
        <end position="197"/>
    </location>
</feature>
<comment type="similarity">
    <text evidence="1">Belongs to the methyltransferase superfamily.</text>
</comment>
<sequence length="197" mass="21596">MDQPWNANIHYDALLDAMVPLGTQCVLDVGCGDGLLAARLARRIPYVTAVDIDAPVLRRAQTRFANAPIRWLHADIMTAELPNAGFDAVVSNAALHHIEDTRTALSRLGGLVTPGGTLAVVTFVTPSLRNGLWHLTSWVACGMANRVKGKWEHSAPIKWPPPQTLHELRSHVRALLPGACIRRLLYGRVLVTWRAPV</sequence>
<protein>
    <recommendedName>
        <fullName>Uncharacterized methyltransferase Mb0092</fullName>
        <ecNumber>2.1.1.-</ecNumber>
    </recommendedName>
</protein>
<keyword id="KW-0489">Methyltransferase</keyword>
<keyword id="KW-1185">Reference proteome</keyword>
<keyword id="KW-0808">Transferase</keyword>
<evidence type="ECO:0000305" key="1"/>
<proteinExistence type="inferred from homology"/>
<organism>
    <name type="scientific">Mycobacterium bovis (strain ATCC BAA-935 / AF2122/97)</name>
    <dbReference type="NCBI Taxonomy" id="233413"/>
    <lineage>
        <taxon>Bacteria</taxon>
        <taxon>Bacillati</taxon>
        <taxon>Actinomycetota</taxon>
        <taxon>Actinomycetes</taxon>
        <taxon>Mycobacteriales</taxon>
        <taxon>Mycobacteriaceae</taxon>
        <taxon>Mycobacterium</taxon>
        <taxon>Mycobacterium tuberculosis complex</taxon>
    </lineage>
</organism>
<gene>
    <name type="ordered locus">BQ2027_MB0092</name>
</gene>
<accession>P65347</accession>
<accession>A0A1R3XUB2</accession>
<accession>Q10886</accession>
<accession>X2BE12</accession>
<name>Y092_MYCBO</name>